<accession>B2RX88</accession>
<accession>C7SBE3</accession>
<accession>C7SBE4</accession>
<accession>Q8CCQ4</accession>
<accession>Q8VE83</accession>
<accession>Q9CQD5</accession>
<reference key="1">
    <citation type="submission" date="2008-08" db="EMBL/GenBank/DDBJ databases">
        <title>Centrosome/spindle pole-associated protein (CSPP) regulates cytokinesis via promoting the recruitment of MyoGEF to the central spindle.</title>
        <authorList>
            <person name="Asiedu M."/>
            <person name="Wu D."/>
            <person name="Matsumura F."/>
            <person name="Wei Q."/>
        </authorList>
    </citation>
    <scope>NUCLEOTIDE SEQUENCE [MRNA] (ISOFORMS 2 AND 3)</scope>
    <source>
        <strain>C57BL/6J</strain>
    </source>
</reference>
<reference key="2">
    <citation type="journal article" date="2005" name="Science">
        <title>The transcriptional landscape of the mammalian genome.</title>
        <authorList>
            <person name="Carninci P."/>
            <person name="Kasukawa T."/>
            <person name="Katayama S."/>
            <person name="Gough J."/>
            <person name="Frith M.C."/>
            <person name="Maeda N."/>
            <person name="Oyama R."/>
            <person name="Ravasi T."/>
            <person name="Lenhard B."/>
            <person name="Wells C."/>
            <person name="Kodzius R."/>
            <person name="Shimokawa K."/>
            <person name="Bajic V.B."/>
            <person name="Brenner S.E."/>
            <person name="Batalov S."/>
            <person name="Forrest A.R."/>
            <person name="Zavolan M."/>
            <person name="Davis M.J."/>
            <person name="Wilming L.G."/>
            <person name="Aidinis V."/>
            <person name="Allen J.E."/>
            <person name="Ambesi-Impiombato A."/>
            <person name="Apweiler R."/>
            <person name="Aturaliya R.N."/>
            <person name="Bailey T.L."/>
            <person name="Bansal M."/>
            <person name="Baxter L."/>
            <person name="Beisel K.W."/>
            <person name="Bersano T."/>
            <person name="Bono H."/>
            <person name="Chalk A.M."/>
            <person name="Chiu K.P."/>
            <person name="Choudhary V."/>
            <person name="Christoffels A."/>
            <person name="Clutterbuck D.R."/>
            <person name="Crowe M.L."/>
            <person name="Dalla E."/>
            <person name="Dalrymple B.P."/>
            <person name="de Bono B."/>
            <person name="Della Gatta G."/>
            <person name="di Bernardo D."/>
            <person name="Down T."/>
            <person name="Engstrom P."/>
            <person name="Fagiolini M."/>
            <person name="Faulkner G."/>
            <person name="Fletcher C.F."/>
            <person name="Fukushima T."/>
            <person name="Furuno M."/>
            <person name="Futaki S."/>
            <person name="Gariboldi M."/>
            <person name="Georgii-Hemming P."/>
            <person name="Gingeras T.R."/>
            <person name="Gojobori T."/>
            <person name="Green R.E."/>
            <person name="Gustincich S."/>
            <person name="Harbers M."/>
            <person name="Hayashi Y."/>
            <person name="Hensch T.K."/>
            <person name="Hirokawa N."/>
            <person name="Hill D."/>
            <person name="Huminiecki L."/>
            <person name="Iacono M."/>
            <person name="Ikeo K."/>
            <person name="Iwama A."/>
            <person name="Ishikawa T."/>
            <person name="Jakt M."/>
            <person name="Kanapin A."/>
            <person name="Katoh M."/>
            <person name="Kawasawa Y."/>
            <person name="Kelso J."/>
            <person name="Kitamura H."/>
            <person name="Kitano H."/>
            <person name="Kollias G."/>
            <person name="Krishnan S.P."/>
            <person name="Kruger A."/>
            <person name="Kummerfeld S.K."/>
            <person name="Kurochkin I.V."/>
            <person name="Lareau L.F."/>
            <person name="Lazarevic D."/>
            <person name="Lipovich L."/>
            <person name="Liu J."/>
            <person name="Liuni S."/>
            <person name="McWilliam S."/>
            <person name="Madan Babu M."/>
            <person name="Madera M."/>
            <person name="Marchionni L."/>
            <person name="Matsuda H."/>
            <person name="Matsuzawa S."/>
            <person name="Miki H."/>
            <person name="Mignone F."/>
            <person name="Miyake S."/>
            <person name="Morris K."/>
            <person name="Mottagui-Tabar S."/>
            <person name="Mulder N."/>
            <person name="Nakano N."/>
            <person name="Nakauchi H."/>
            <person name="Ng P."/>
            <person name="Nilsson R."/>
            <person name="Nishiguchi S."/>
            <person name="Nishikawa S."/>
            <person name="Nori F."/>
            <person name="Ohara O."/>
            <person name="Okazaki Y."/>
            <person name="Orlando V."/>
            <person name="Pang K.C."/>
            <person name="Pavan W.J."/>
            <person name="Pavesi G."/>
            <person name="Pesole G."/>
            <person name="Petrovsky N."/>
            <person name="Piazza S."/>
            <person name="Reed J."/>
            <person name="Reid J.F."/>
            <person name="Ring B.Z."/>
            <person name="Ringwald M."/>
            <person name="Rost B."/>
            <person name="Ruan Y."/>
            <person name="Salzberg S.L."/>
            <person name="Sandelin A."/>
            <person name="Schneider C."/>
            <person name="Schoenbach C."/>
            <person name="Sekiguchi K."/>
            <person name="Semple C.A."/>
            <person name="Seno S."/>
            <person name="Sessa L."/>
            <person name="Sheng Y."/>
            <person name="Shibata Y."/>
            <person name="Shimada H."/>
            <person name="Shimada K."/>
            <person name="Silva D."/>
            <person name="Sinclair B."/>
            <person name="Sperling S."/>
            <person name="Stupka E."/>
            <person name="Sugiura K."/>
            <person name="Sultana R."/>
            <person name="Takenaka Y."/>
            <person name="Taki K."/>
            <person name="Tammoja K."/>
            <person name="Tan S.L."/>
            <person name="Tang S."/>
            <person name="Taylor M.S."/>
            <person name="Tegner J."/>
            <person name="Teichmann S.A."/>
            <person name="Ueda H.R."/>
            <person name="van Nimwegen E."/>
            <person name="Verardo R."/>
            <person name="Wei C.L."/>
            <person name="Yagi K."/>
            <person name="Yamanishi H."/>
            <person name="Zabarovsky E."/>
            <person name="Zhu S."/>
            <person name="Zimmer A."/>
            <person name="Hide W."/>
            <person name="Bult C."/>
            <person name="Grimmond S.M."/>
            <person name="Teasdale R.D."/>
            <person name="Liu E.T."/>
            <person name="Brusic V."/>
            <person name="Quackenbush J."/>
            <person name="Wahlestedt C."/>
            <person name="Mattick J.S."/>
            <person name="Hume D.A."/>
            <person name="Kai C."/>
            <person name="Sasaki D."/>
            <person name="Tomaru Y."/>
            <person name="Fukuda S."/>
            <person name="Kanamori-Katayama M."/>
            <person name="Suzuki M."/>
            <person name="Aoki J."/>
            <person name="Arakawa T."/>
            <person name="Iida J."/>
            <person name="Imamura K."/>
            <person name="Itoh M."/>
            <person name="Kato T."/>
            <person name="Kawaji H."/>
            <person name="Kawagashira N."/>
            <person name="Kawashima T."/>
            <person name="Kojima M."/>
            <person name="Kondo S."/>
            <person name="Konno H."/>
            <person name="Nakano K."/>
            <person name="Ninomiya N."/>
            <person name="Nishio T."/>
            <person name="Okada M."/>
            <person name="Plessy C."/>
            <person name="Shibata K."/>
            <person name="Shiraki T."/>
            <person name="Suzuki S."/>
            <person name="Tagami M."/>
            <person name="Waki K."/>
            <person name="Watahiki A."/>
            <person name="Okamura-Oho Y."/>
            <person name="Suzuki H."/>
            <person name="Kawai J."/>
            <person name="Hayashizaki Y."/>
        </authorList>
    </citation>
    <scope>NUCLEOTIDE SEQUENCE [LARGE SCALE MRNA] (ISOFORMS 5 AND 6)</scope>
    <source>
        <strain>C57BL/6J</strain>
        <tissue>Olfactory bulb</tissue>
        <tissue>Testis</tissue>
    </source>
</reference>
<reference key="3">
    <citation type="journal article" date="2009" name="PLoS Biol.">
        <title>Lineage-specific biology revealed by a finished genome assembly of the mouse.</title>
        <authorList>
            <person name="Church D.M."/>
            <person name="Goodstadt L."/>
            <person name="Hillier L.W."/>
            <person name="Zody M.C."/>
            <person name="Goldstein S."/>
            <person name="She X."/>
            <person name="Bult C.J."/>
            <person name="Agarwala R."/>
            <person name="Cherry J.L."/>
            <person name="DiCuccio M."/>
            <person name="Hlavina W."/>
            <person name="Kapustin Y."/>
            <person name="Meric P."/>
            <person name="Maglott D."/>
            <person name="Birtle Z."/>
            <person name="Marques A.C."/>
            <person name="Graves T."/>
            <person name="Zhou S."/>
            <person name="Teague B."/>
            <person name="Potamousis K."/>
            <person name="Churas C."/>
            <person name="Place M."/>
            <person name="Herschleb J."/>
            <person name="Runnheim R."/>
            <person name="Forrest D."/>
            <person name="Amos-Landgraf J."/>
            <person name="Schwartz D.C."/>
            <person name="Cheng Z."/>
            <person name="Lindblad-Toh K."/>
            <person name="Eichler E.E."/>
            <person name="Ponting C.P."/>
        </authorList>
    </citation>
    <scope>NUCLEOTIDE SEQUENCE [LARGE SCALE GENOMIC DNA]</scope>
    <source>
        <strain>C57BL/6J</strain>
    </source>
</reference>
<reference key="4">
    <citation type="submission" date="2005-07" db="EMBL/GenBank/DDBJ databases">
        <authorList>
            <person name="Mural R.J."/>
            <person name="Adams M.D."/>
            <person name="Myers E.W."/>
            <person name="Smith H.O."/>
            <person name="Venter J.C."/>
        </authorList>
    </citation>
    <scope>NUCLEOTIDE SEQUENCE [LARGE SCALE GENOMIC DNA]</scope>
</reference>
<reference key="5">
    <citation type="journal article" date="2004" name="Genome Res.">
        <title>The status, quality, and expansion of the NIH full-length cDNA project: the Mammalian Gene Collection (MGC).</title>
        <authorList>
            <consortium name="The MGC Project Team"/>
        </authorList>
    </citation>
    <scope>NUCLEOTIDE SEQUENCE [LARGE SCALE MRNA] (ISOFORMS 4 AND 6)</scope>
    <source>
        <strain>Czech II</strain>
        <tissue>Brain</tissue>
        <tissue>Mammary tumor</tissue>
    </source>
</reference>
<reference key="6">
    <citation type="journal article" date="2009" name="Mol. Biol. Cell">
        <title>Centrosome/spindle pole-associated protein regulates cytokinesis via promoting the recruitment of MyoGEF to the central spindle.</title>
        <authorList>
            <person name="Asiedu M."/>
            <person name="Wu D."/>
            <person name="Matsumura F."/>
            <person name="Wei Q."/>
        </authorList>
    </citation>
    <scope>ALTERNATIVE SPLICING (ISOFORMS 1; 2 AND 4)</scope>
    <scope>SUBCELLULAR LOCATION</scope>
    <scope>INTERACTION WITH PLEKHG6</scope>
</reference>
<reference key="7">
    <citation type="journal article" date="2010" name="Cell">
        <title>A tissue-specific atlas of mouse protein phosphorylation and expression.</title>
        <authorList>
            <person name="Huttlin E.L."/>
            <person name="Jedrychowski M.P."/>
            <person name="Elias J.E."/>
            <person name="Goswami T."/>
            <person name="Rad R."/>
            <person name="Beausoleil S.A."/>
            <person name="Villen J."/>
            <person name="Haas W."/>
            <person name="Sowa M.E."/>
            <person name="Gygi S.P."/>
        </authorList>
    </citation>
    <scope>PHOSPHORYLATION [LARGE SCALE ANALYSIS] AT SER-405 AND SER-915</scope>
    <scope>IDENTIFICATION BY MASS SPECTROMETRY [LARGE SCALE ANALYSIS]</scope>
    <source>
        <tissue>Kidney</tissue>
        <tissue>Lung</tissue>
        <tissue>Pancreas</tissue>
        <tissue>Spleen</tissue>
        <tissue>Testis</tissue>
    </source>
</reference>
<comment type="function">
    <text evidence="2">May play a role in cell-cycle-dependent microtubule organization.</text>
</comment>
<comment type="subunit">
    <text evidence="2 5">Interacts with PLEKHG6. Interacts with ARMC9, TOGARAM1, CCDC66, CEP104 and CEP290 (By similarity).</text>
</comment>
<comment type="subcellular location">
    <subcellularLocation>
        <location evidence="2">Cytoplasm</location>
        <location evidence="2">Cytoskeleton</location>
        <location evidence="2">Microtubule organizing center</location>
        <location evidence="2">Centrosome</location>
    </subcellularLocation>
    <subcellularLocation>
        <location evidence="5">Cytoplasm</location>
        <location evidence="5">Cytoskeleton</location>
        <location evidence="5">Spindle</location>
    </subcellularLocation>
    <subcellularLocation>
        <location evidence="5">Cytoplasm</location>
        <location evidence="5">Cytoskeleton</location>
        <location evidence="5">Spindle pole</location>
    </subcellularLocation>
    <subcellularLocation>
        <location evidence="2">Cell projection</location>
        <location evidence="2">Cilium</location>
    </subcellularLocation>
    <text evidence="2">Associated with mitotic spindles.</text>
</comment>
<comment type="alternative products">
    <event type="alternative splicing"/>
    <isoform>
        <id>B2RX88-1</id>
        <name>1</name>
        <sequence type="displayed"/>
    </isoform>
    <isoform>
        <id>B2RX88-2</id>
        <name>2</name>
        <name>Cspp2</name>
        <sequence type="described" ref="VSP_040073 VSP_040079"/>
    </isoform>
    <isoform>
        <id>B2RX88-3</id>
        <name>3</name>
        <name>Cspp3</name>
        <sequence type="described" ref="VSP_040074 VSP_040077 VSP_040078"/>
    </isoform>
    <isoform>
        <id>B2RX88-4</id>
        <name>4</name>
        <sequence type="described" ref="VSP_040074"/>
    </isoform>
    <isoform>
        <id>B2RX88-5</id>
        <name>5</name>
        <sequence type="described" ref="VSP_040075 VSP_040076"/>
    </isoform>
    <isoform>
        <id>B2RX88-6</id>
        <name>6</name>
        <sequence type="described" ref="VSP_040074 VSP_040075 VSP_040076"/>
    </isoform>
</comment>
<comment type="PTM">
    <text evidence="1">Phosphorylated. Phosphorylation increases in colcemide-treated cells (By similarity).</text>
</comment>
<name>CSPP1_MOUSE</name>
<sequence length="1205" mass="138312">MADSLDEFIEEQKAKLAKDKAELESDPPYMEMKGKASEKLSENSKILISMAKENIPPSSQQQPKGPLGIEYGLSLPLGEDYEQKKHKLKEELRQDYRRYLTQGITQAKRKKNFLSTGETDPSTLGVSLPIDERLSAKERLKLERNREYNQFLRGKAESTEKVRQVEKNIEPKSQRNKNPISQGKSDLPLQIQTAYTHSEGPWLSRQEEGLYRQLDGEIELRSRRPLKQTKEEVGISGAEHPSLSGSAGVPERRARRANGERVLDRQHCRADRDPGVSEDMDERFRFESDFDRRLLRVYTNGRPHGSRRGYVDGDDVPEEPNTQISAAENKSVHCNGPPRSADLDITSPFAGMLFGGEDRELTKRRKEKYRQELLEQIAEQQKKKRREKDLAFGITTSGVQDPEKSPDRLKQFSLTPRHFEEMPPERPRVAFQTPPPPFSAPSSPSVPPVHSAPSHNEDLHSGLGSTLGELAHPRVLPVPLNPPPPPLLAPPASNYRTPYDDAYYFYGARNTLDPNIVYYGSGMIGGQPAPHVSAPVTHQVAPPAVNTVGQNEQKVLSDGLRNSGLVFEDKPKPSTQSLQSYQEALQEQIREREARRKKERLEKEEYEAKLEAEMRIYNPWGKGGGGAPLRDAKGNLITDLNRMHRQNIDAYHNPDARTYEDKRAVVSIDQNLATSNAENLEDSANKNSGPLQTQSSPFARGNTFGEPLSELQIKQQELYKNFLRFQIEEKRQREEAEREKLRVAEEKEEKRLAEQRARIQQEYEEEQERRREKEEEQRLKNEELIRLAEERRKEAERKKKEEEEKHNLQLQHYYERENIIGDETKHLRQPSPVVPALQNKIASKLQRPPSVDTIISSFIHESSMSRAQSPPVPARKNQLRAEEEKKNVIMELSEMRKQLRSEERRLQGRLLHLDSDDEIPMRKRERNPMDIFDMARHRVQAPVRRPSPKGLDATTFQNIHDFNELRERDSDTRVDLRLMYPDPPRDHHTLEIQQQALLREQQKRLNRIKMRRDAGADLDTICTDNAQGRRMPRDDTNDFLKNSLLESDSAFIGAYGETYPVIEDNAFPPPSQLPSARERRRNKLKGLDFDSSRLHTPQDGLSLKSISSVNVDQVRMRNEDRMRRLTEQQKKPTNTDDEGSLVDPDDIMRHLSDDGRNSAATEPWLRPGTSESLKRFMAEHLNEEQHKGPGKPGTFTWQGLSAAHA</sequence>
<dbReference type="EMBL" id="FJ008677">
    <property type="protein sequence ID" value="ACM46986.1"/>
    <property type="molecule type" value="mRNA"/>
</dbReference>
<dbReference type="EMBL" id="FJ008676">
    <property type="protein sequence ID" value="ACM46985.1"/>
    <property type="molecule type" value="mRNA"/>
</dbReference>
<dbReference type="EMBL" id="AK013065">
    <property type="protein sequence ID" value="BAB28630.1"/>
    <property type="molecule type" value="mRNA"/>
</dbReference>
<dbReference type="EMBL" id="AK015133">
    <property type="protein sequence ID" value="BAB29721.1"/>
    <property type="molecule type" value="mRNA"/>
</dbReference>
<dbReference type="EMBL" id="AK032310">
    <property type="protein sequence ID" value="BAC27806.1"/>
    <property type="molecule type" value="mRNA"/>
</dbReference>
<dbReference type="EMBL" id="AC102570">
    <property type="status" value="NOT_ANNOTATED_CDS"/>
    <property type="molecule type" value="Genomic_DNA"/>
</dbReference>
<dbReference type="EMBL" id="AC159972">
    <property type="status" value="NOT_ANNOTATED_CDS"/>
    <property type="molecule type" value="Genomic_DNA"/>
</dbReference>
<dbReference type="EMBL" id="CH466536">
    <property type="protein sequence ID" value="EDL14300.1"/>
    <property type="molecule type" value="Genomic_DNA"/>
</dbReference>
<dbReference type="EMBL" id="CH466536">
    <property type="protein sequence ID" value="EDL14303.1"/>
    <property type="molecule type" value="Genomic_DNA"/>
</dbReference>
<dbReference type="EMBL" id="BC019581">
    <property type="protein sequence ID" value="AAH19581.1"/>
    <property type="molecule type" value="mRNA"/>
</dbReference>
<dbReference type="EMBL" id="BC151042">
    <property type="protein sequence ID" value="AAI51043.1"/>
    <property type="molecule type" value="mRNA"/>
</dbReference>
<dbReference type="CCDS" id="CCDS35511.1">
    <molecule id="B2RX88-4"/>
</dbReference>
<dbReference type="CCDS" id="CCDS87812.1">
    <molecule id="B2RX88-2"/>
</dbReference>
<dbReference type="RefSeq" id="NP_001355745.1">
    <molecule id="B2RX88-2"/>
    <property type="nucleotide sequence ID" value="NM_001368816.1"/>
</dbReference>
<dbReference type="RefSeq" id="NP_080769.3">
    <molecule id="B2RX88-4"/>
    <property type="nucleotide sequence ID" value="NM_026493.3"/>
</dbReference>
<dbReference type="RefSeq" id="XP_006495545.1">
    <molecule id="B2RX88-1"/>
    <property type="nucleotide sequence ID" value="XM_006495482.5"/>
</dbReference>
<dbReference type="RefSeq" id="XP_006495546.1">
    <molecule id="B2RX88-4"/>
    <property type="nucleotide sequence ID" value="XM_006495483.4"/>
</dbReference>
<dbReference type="RefSeq" id="XP_006495547.1">
    <property type="nucleotide sequence ID" value="XM_006495484.3"/>
</dbReference>
<dbReference type="RefSeq" id="XP_006495549.1">
    <property type="nucleotide sequence ID" value="XM_006495486.2"/>
</dbReference>
<dbReference type="RefSeq" id="XP_011236667.1">
    <property type="nucleotide sequence ID" value="XM_011238365.2"/>
</dbReference>
<dbReference type="SMR" id="B2RX88"/>
<dbReference type="BioGRID" id="229256">
    <property type="interactions" value="5"/>
</dbReference>
<dbReference type="FunCoup" id="B2RX88">
    <property type="interactions" value="1428"/>
</dbReference>
<dbReference type="IntAct" id="B2RX88">
    <property type="interactions" value="1"/>
</dbReference>
<dbReference type="STRING" id="10090.ENSMUSP00000068804"/>
<dbReference type="GlyGen" id="B2RX88">
    <property type="glycosylation" value="1 site, 1 O-linked glycan (1 site)"/>
</dbReference>
<dbReference type="iPTMnet" id="B2RX88"/>
<dbReference type="PhosphoSitePlus" id="B2RX88"/>
<dbReference type="jPOST" id="B2RX88"/>
<dbReference type="PaxDb" id="10090-ENSMUSP00000068804"/>
<dbReference type="PeptideAtlas" id="B2RX88"/>
<dbReference type="ProteomicsDB" id="284047">
    <molecule id="B2RX88-1"/>
</dbReference>
<dbReference type="ProteomicsDB" id="284048">
    <molecule id="B2RX88-2"/>
</dbReference>
<dbReference type="ProteomicsDB" id="284049">
    <molecule id="B2RX88-3"/>
</dbReference>
<dbReference type="ProteomicsDB" id="284050">
    <molecule id="B2RX88-4"/>
</dbReference>
<dbReference type="ProteomicsDB" id="284051">
    <molecule id="B2RX88-5"/>
</dbReference>
<dbReference type="ProteomicsDB" id="284052">
    <molecule id="B2RX88-6"/>
</dbReference>
<dbReference type="Antibodypedia" id="42498">
    <property type="antibodies" value="170 antibodies from 28 providers"/>
</dbReference>
<dbReference type="DNASU" id="211660"/>
<dbReference type="Ensembl" id="ENSMUST00000071087.12">
    <molecule id="B2RX88-4"/>
    <property type="protein sequence ID" value="ENSMUSP00000068804.6"/>
    <property type="gene ID" value="ENSMUSG00000056763.17"/>
</dbReference>
<dbReference type="Ensembl" id="ENSMUST00000117415.8">
    <molecule id="B2RX88-6"/>
    <property type="protein sequence ID" value="ENSMUSP00000112800.2"/>
    <property type="gene ID" value="ENSMUSG00000056763.17"/>
</dbReference>
<dbReference type="Ensembl" id="ENSMUST00000118263.8">
    <molecule id="B2RX88-6"/>
    <property type="protein sequence ID" value="ENSMUSP00000112476.2"/>
    <property type="gene ID" value="ENSMUSG00000056763.17"/>
</dbReference>
<dbReference type="Ensembl" id="ENSMUST00000119714.8">
    <molecule id="B2RX88-6"/>
    <property type="protein sequence ID" value="ENSMUSP00000114091.2"/>
    <property type="gene ID" value="ENSMUSG00000056763.17"/>
</dbReference>
<dbReference type="Ensembl" id="ENSMUST00000122156.8">
    <molecule id="B2RX88-5"/>
    <property type="protein sequence ID" value="ENSMUSP00000113663.2"/>
    <property type="gene ID" value="ENSMUSG00000056763.17"/>
</dbReference>
<dbReference type="Ensembl" id="ENSMUST00000186294.7">
    <molecule id="B2RX88-2"/>
    <property type="protein sequence ID" value="ENSMUSP00000139775.2"/>
    <property type="gene ID" value="ENSMUSG00000056763.17"/>
</dbReference>
<dbReference type="GeneID" id="211660"/>
<dbReference type="KEGG" id="mmu:211660"/>
<dbReference type="UCSC" id="uc007ahh.1">
    <molecule id="B2RX88-6"/>
    <property type="organism name" value="mouse"/>
</dbReference>
<dbReference type="UCSC" id="uc007ahi.1">
    <molecule id="B2RX88-4"/>
    <property type="organism name" value="mouse"/>
</dbReference>
<dbReference type="UCSC" id="uc007ahj.1">
    <molecule id="B2RX88-5"/>
    <property type="organism name" value="mouse"/>
</dbReference>
<dbReference type="UCSC" id="uc011wig.1">
    <molecule id="B2RX88-3"/>
    <property type="organism name" value="mouse"/>
</dbReference>
<dbReference type="UCSC" id="uc011wih.1">
    <molecule id="B2RX88-2"/>
    <property type="organism name" value="mouse"/>
</dbReference>
<dbReference type="AGR" id="MGI:2681832"/>
<dbReference type="CTD" id="79848"/>
<dbReference type="MGI" id="MGI:2681832">
    <property type="gene designation" value="Cspp1"/>
</dbReference>
<dbReference type="VEuPathDB" id="HostDB:ENSMUSG00000056763"/>
<dbReference type="eggNOG" id="ENOG502QTSW">
    <property type="taxonomic scope" value="Eukaryota"/>
</dbReference>
<dbReference type="GeneTree" id="ENSGT00390000015084"/>
<dbReference type="HOGENOM" id="CLU_009662_0_0_1"/>
<dbReference type="InParanoid" id="B2RX88"/>
<dbReference type="OMA" id="HRMPRDD"/>
<dbReference type="PhylomeDB" id="B2RX88"/>
<dbReference type="TreeFam" id="TF335475"/>
<dbReference type="BioGRID-ORCS" id="211660">
    <property type="hits" value="0 hits in 76 CRISPR screens"/>
</dbReference>
<dbReference type="ChiTaRS" id="Cspp1">
    <property type="organism name" value="mouse"/>
</dbReference>
<dbReference type="PRO" id="PR:B2RX88"/>
<dbReference type="Proteomes" id="UP000000589">
    <property type="component" value="Chromosome 1"/>
</dbReference>
<dbReference type="RNAct" id="B2RX88">
    <property type="molecule type" value="protein"/>
</dbReference>
<dbReference type="Bgee" id="ENSMUSG00000056763">
    <property type="expression patterns" value="Expressed in metanephric cortical collecting duct and 240 other cell types or tissues"/>
</dbReference>
<dbReference type="ExpressionAtlas" id="B2RX88">
    <property type="expression patterns" value="baseline and differential"/>
</dbReference>
<dbReference type="GO" id="GO:0034451">
    <property type="term" value="C:centriolar satellite"/>
    <property type="evidence" value="ECO:0007669"/>
    <property type="project" value="Ensembl"/>
</dbReference>
<dbReference type="GO" id="GO:0005813">
    <property type="term" value="C:centrosome"/>
    <property type="evidence" value="ECO:0000250"/>
    <property type="project" value="UniProtKB"/>
</dbReference>
<dbReference type="GO" id="GO:0036064">
    <property type="term" value="C:ciliary basal body"/>
    <property type="evidence" value="ECO:0007669"/>
    <property type="project" value="Ensembl"/>
</dbReference>
<dbReference type="GO" id="GO:0005929">
    <property type="term" value="C:cilium"/>
    <property type="evidence" value="ECO:0000250"/>
    <property type="project" value="UniProtKB"/>
</dbReference>
<dbReference type="GO" id="GO:0005737">
    <property type="term" value="C:cytoplasm"/>
    <property type="evidence" value="ECO:0007669"/>
    <property type="project" value="UniProtKB-KW"/>
</dbReference>
<dbReference type="GO" id="GO:0005874">
    <property type="term" value="C:microtubule"/>
    <property type="evidence" value="ECO:0007669"/>
    <property type="project" value="UniProtKB-KW"/>
</dbReference>
<dbReference type="GO" id="GO:0005654">
    <property type="term" value="C:nucleoplasm"/>
    <property type="evidence" value="ECO:0007669"/>
    <property type="project" value="Ensembl"/>
</dbReference>
<dbReference type="GO" id="GO:0005819">
    <property type="term" value="C:spindle"/>
    <property type="evidence" value="ECO:0000314"/>
    <property type="project" value="UniProtKB"/>
</dbReference>
<dbReference type="GO" id="GO:0000922">
    <property type="term" value="C:spindle pole"/>
    <property type="evidence" value="ECO:0000314"/>
    <property type="project" value="UniProtKB"/>
</dbReference>
<dbReference type="GO" id="GO:0051781">
    <property type="term" value="P:positive regulation of cell division"/>
    <property type="evidence" value="ECO:0000250"/>
    <property type="project" value="UniProtKB"/>
</dbReference>
<dbReference type="GO" id="GO:0032467">
    <property type="term" value="P:positive regulation of cytokinesis"/>
    <property type="evidence" value="ECO:0000250"/>
    <property type="project" value="UniProtKB"/>
</dbReference>
<dbReference type="InterPro" id="IPR026708">
    <property type="entry name" value="CSPP1"/>
</dbReference>
<dbReference type="PANTHER" id="PTHR21616:SF2">
    <property type="entry name" value="CENTROSOME AND SPINDLE POLE-ASSOCIATED PROTEIN 1"/>
    <property type="match status" value="1"/>
</dbReference>
<dbReference type="PANTHER" id="PTHR21616">
    <property type="entry name" value="CENTROSOME SPINDLE POLE ASSOCIATED PROTEIN"/>
    <property type="match status" value="1"/>
</dbReference>
<dbReference type="Pfam" id="PF24578">
    <property type="entry name" value="CSPP1_C"/>
    <property type="match status" value="1"/>
</dbReference>
<gene>
    <name type="primary">Cspp1</name>
    <name type="synonym">Cspp</name>
</gene>
<organism>
    <name type="scientific">Mus musculus</name>
    <name type="common">Mouse</name>
    <dbReference type="NCBI Taxonomy" id="10090"/>
    <lineage>
        <taxon>Eukaryota</taxon>
        <taxon>Metazoa</taxon>
        <taxon>Chordata</taxon>
        <taxon>Craniata</taxon>
        <taxon>Vertebrata</taxon>
        <taxon>Euteleostomi</taxon>
        <taxon>Mammalia</taxon>
        <taxon>Eutheria</taxon>
        <taxon>Euarchontoglires</taxon>
        <taxon>Glires</taxon>
        <taxon>Rodentia</taxon>
        <taxon>Myomorpha</taxon>
        <taxon>Muroidea</taxon>
        <taxon>Muridae</taxon>
        <taxon>Murinae</taxon>
        <taxon>Mus</taxon>
        <taxon>Mus</taxon>
    </lineage>
</organism>
<evidence type="ECO:0000250" key="1"/>
<evidence type="ECO:0000250" key="2">
    <source>
        <dbReference type="UniProtKB" id="Q1MSJ5"/>
    </source>
</evidence>
<evidence type="ECO:0000255" key="3"/>
<evidence type="ECO:0000256" key="4">
    <source>
        <dbReference type="SAM" id="MobiDB-lite"/>
    </source>
</evidence>
<evidence type="ECO:0000269" key="5">
    <source>
    </source>
</evidence>
<evidence type="ECO:0000303" key="6">
    <source>
    </source>
</evidence>
<evidence type="ECO:0000303" key="7">
    <source>
    </source>
</evidence>
<evidence type="ECO:0000303" key="8">
    <source ref="1"/>
</evidence>
<evidence type="ECO:0000305" key="9"/>
<evidence type="ECO:0007744" key="10">
    <source>
    </source>
</evidence>
<keyword id="KW-0025">Alternative splicing</keyword>
<keyword id="KW-0966">Cell projection</keyword>
<keyword id="KW-0175">Coiled coil</keyword>
<keyword id="KW-0963">Cytoplasm</keyword>
<keyword id="KW-0206">Cytoskeleton</keyword>
<keyword id="KW-0493">Microtubule</keyword>
<keyword id="KW-0597">Phosphoprotein</keyword>
<keyword id="KW-1185">Reference proteome</keyword>
<protein>
    <recommendedName>
        <fullName>Centrosome and spindle pole associated protein 1</fullName>
    </recommendedName>
</protein>
<feature type="chain" id="PRO_0000401192" description="Centrosome and spindle pole associated protein 1">
    <location>
        <begin position="1"/>
        <end position="1205"/>
    </location>
</feature>
<feature type="region of interest" description="Disordered" evidence="4">
    <location>
        <begin position="16"/>
        <end position="37"/>
    </location>
</feature>
<feature type="region of interest" description="Disordered" evidence="4">
    <location>
        <begin position="158"/>
        <end position="187"/>
    </location>
</feature>
<feature type="region of interest" description="Disordered" evidence="4">
    <location>
        <begin position="222"/>
        <end position="277"/>
    </location>
</feature>
<feature type="region of interest" description="Disordered" evidence="4">
    <location>
        <begin position="380"/>
        <end position="467"/>
    </location>
</feature>
<feature type="region of interest" description="Disordered" evidence="4">
    <location>
        <begin position="677"/>
        <end position="704"/>
    </location>
</feature>
<feature type="region of interest" description="Disordered" evidence="4">
    <location>
        <begin position="862"/>
        <end position="881"/>
    </location>
</feature>
<feature type="region of interest" description="Disordered" evidence="4">
    <location>
        <begin position="1086"/>
        <end position="1105"/>
    </location>
</feature>
<feature type="region of interest" description="Disordered" evidence="4">
    <location>
        <begin position="1124"/>
        <end position="1169"/>
    </location>
</feature>
<feature type="region of interest" description="Disordered" evidence="4">
    <location>
        <begin position="1182"/>
        <end position="1205"/>
    </location>
</feature>
<feature type="coiled-coil region" evidence="3">
    <location>
        <begin position="12"/>
        <end position="34"/>
    </location>
</feature>
<feature type="coiled-coil region" evidence="3">
    <location>
        <begin position="87"/>
        <end position="108"/>
    </location>
</feature>
<feature type="coiled-coil region" evidence="3">
    <location>
        <begin position="357"/>
        <end position="391"/>
    </location>
</feature>
<feature type="coiled-coil region" evidence="3">
    <location>
        <begin position="574"/>
        <end position="618"/>
    </location>
</feature>
<feature type="coiled-coil region" evidence="3">
    <location>
        <begin position="724"/>
        <end position="813"/>
    </location>
</feature>
<feature type="coiled-coil region" evidence="3">
    <location>
        <begin position="874"/>
        <end position="911"/>
    </location>
</feature>
<feature type="coiled-coil region" evidence="3">
    <location>
        <begin position="993"/>
        <end position="1014"/>
    </location>
</feature>
<feature type="compositionally biased region" description="Basic and acidic residues" evidence="4">
    <location>
        <begin position="158"/>
        <end position="173"/>
    </location>
</feature>
<feature type="compositionally biased region" description="Polar residues" evidence="4">
    <location>
        <begin position="176"/>
        <end position="187"/>
    </location>
</feature>
<feature type="compositionally biased region" description="Basic and acidic residues" evidence="4">
    <location>
        <begin position="222"/>
        <end position="233"/>
    </location>
</feature>
<feature type="compositionally biased region" description="Basic and acidic residues" evidence="4">
    <location>
        <begin position="257"/>
        <end position="275"/>
    </location>
</feature>
<feature type="compositionally biased region" description="Basic and acidic residues" evidence="4">
    <location>
        <begin position="401"/>
        <end position="410"/>
    </location>
</feature>
<feature type="compositionally biased region" description="Basic and acidic residues" evidence="4">
    <location>
        <begin position="417"/>
        <end position="428"/>
    </location>
</feature>
<feature type="compositionally biased region" description="Pro residues" evidence="4">
    <location>
        <begin position="433"/>
        <end position="447"/>
    </location>
</feature>
<feature type="compositionally biased region" description="Polar residues" evidence="4">
    <location>
        <begin position="685"/>
        <end position="697"/>
    </location>
</feature>
<feature type="compositionally biased region" description="Basic and acidic residues" evidence="4">
    <location>
        <begin position="1124"/>
        <end position="1134"/>
    </location>
</feature>
<feature type="compositionally biased region" description="Acidic residues" evidence="4">
    <location>
        <begin position="1135"/>
        <end position="1145"/>
    </location>
</feature>
<feature type="compositionally biased region" description="Basic and acidic residues" evidence="4">
    <location>
        <begin position="1146"/>
        <end position="1156"/>
    </location>
</feature>
<feature type="modified residue" description="Phosphoserine" evidence="10">
    <location>
        <position position="405"/>
    </location>
</feature>
<feature type="modified residue" description="Phosphoserine" evidence="2">
    <location>
        <position position="850"/>
    </location>
</feature>
<feature type="modified residue" description="Phosphoserine" evidence="2">
    <location>
        <position position="869"/>
    </location>
</feature>
<feature type="modified residue" description="Phosphoserine" evidence="10">
    <location>
        <position position="915"/>
    </location>
</feature>
<feature type="splice variant" id="VSP_040073" description="In isoform 2." evidence="8">
    <original>MADSLDEFIEEQKAKLAKDKAELESDPPYMEMK</original>
    <variation>MDLNCYPHLVAGHAHSYLIWR</variation>
    <location>
        <begin position="1"/>
        <end position="33"/>
    </location>
</feature>
<feature type="splice variant" id="VSP_040074" description="In isoform 3, isoform 4 and isoform 6." evidence="6 7 8">
    <location>
        <begin position="103"/>
        <end position="110"/>
    </location>
</feature>
<feature type="splice variant" id="VSP_040075" description="In isoform 5 and isoform 6." evidence="6 7">
    <original>PHGSRRGYVDGDDVPEE</original>
    <variation>YLHLHFSSLYLLNTGVL</variation>
    <location>
        <begin position="303"/>
        <end position="319"/>
    </location>
</feature>
<feature type="splice variant" id="VSP_040076" description="In isoform 5 and isoform 6." evidence="6 7">
    <location>
        <begin position="320"/>
        <end position="1205"/>
    </location>
</feature>
<feature type="splice variant" id="VSP_040077" description="In isoform 3." evidence="8">
    <original>PDRLKQFSLTPRHFEEMPP</original>
    <variation>GSACASESTPASAPCPPSSF</variation>
    <location>
        <begin position="406"/>
        <end position="424"/>
    </location>
</feature>
<feature type="splice variant" id="VSP_040078" description="In isoform 3." evidence="8">
    <location>
        <begin position="425"/>
        <end position="1205"/>
    </location>
</feature>
<feature type="splice variant" id="VSP_040079" description="In isoform 2." evidence="8">
    <original>TDLNRMHRQNIDAYHNPDARTYEDKRAVVSIDQNLATSNAENLEDSANKNSG</original>
    <variation>S</variation>
    <location>
        <begin position="638"/>
        <end position="689"/>
    </location>
</feature>
<feature type="sequence conflict" description="In Ref. 5; AAH19581." evidence="9" ref="5">
    <original>G</original>
    <variation>E</variation>
    <location>
        <position position="259"/>
    </location>
</feature>
<feature type="sequence conflict" description="In Ref. 1; ACM46986." evidence="9" ref="1">
    <original>I</original>
    <variation>V</variation>
    <location>
        <position position="324"/>
    </location>
</feature>
<feature type="sequence conflict" description="In Ref. 1; ACM46985." evidence="9" ref="1">
    <original>D</original>
    <variation>G</variation>
    <location>
        <position position="358"/>
    </location>
</feature>
<feature type="sequence conflict" description="In Ref. 1; ACM46985." evidence="9" ref="1">
    <original>I</original>
    <variation>V</variation>
    <location>
        <position position="394"/>
    </location>
</feature>
<feature type="sequence conflict" description="In Ref. 1; ACM46985." evidence="9" ref="1">
    <original>F</original>
    <variation>S</variation>
    <location>
        <position position="412"/>
    </location>
</feature>
<proteinExistence type="evidence at protein level"/>